<organism>
    <name type="scientific">Escherichia fergusonii (strain ATCC 35469 / DSM 13698 / CCUG 18766 / IAM 14443 / JCM 21226 / LMG 7866 / NBRC 102419 / NCTC 12128 / CDC 0568-73)</name>
    <dbReference type="NCBI Taxonomy" id="585054"/>
    <lineage>
        <taxon>Bacteria</taxon>
        <taxon>Pseudomonadati</taxon>
        <taxon>Pseudomonadota</taxon>
        <taxon>Gammaproteobacteria</taxon>
        <taxon>Enterobacterales</taxon>
        <taxon>Enterobacteriaceae</taxon>
        <taxon>Escherichia</taxon>
    </lineage>
</organism>
<proteinExistence type="inferred from homology"/>
<comment type="function">
    <text evidence="1">Catalyzes the transfer of an acyl group from acyl-ACP to glycerol-3-phosphate (G3P) to form lysophosphatidic acid (LPA). This enzyme can also utilize acyl-CoA as fatty acyl donor, but not acyl-PO(4).</text>
</comment>
<comment type="catalytic activity">
    <reaction evidence="1">
        <text>sn-glycerol 3-phosphate + an acyl-CoA = a 1-acyl-sn-glycero-3-phosphate + CoA</text>
        <dbReference type="Rhea" id="RHEA:15325"/>
        <dbReference type="ChEBI" id="CHEBI:57287"/>
        <dbReference type="ChEBI" id="CHEBI:57597"/>
        <dbReference type="ChEBI" id="CHEBI:57970"/>
        <dbReference type="ChEBI" id="CHEBI:58342"/>
        <dbReference type="EC" id="2.3.1.15"/>
    </reaction>
</comment>
<comment type="catalytic activity">
    <reaction evidence="1">
        <text>a fatty acyl-[ACP] + sn-glycerol 3-phosphate = a 1-acyl-sn-glycero-3-phosphate + holo-[ACP]</text>
        <dbReference type="Rhea" id="RHEA:42300"/>
        <dbReference type="Rhea" id="RHEA-COMP:9685"/>
        <dbReference type="Rhea" id="RHEA-COMP:14125"/>
        <dbReference type="ChEBI" id="CHEBI:57597"/>
        <dbReference type="ChEBI" id="CHEBI:57970"/>
        <dbReference type="ChEBI" id="CHEBI:64479"/>
        <dbReference type="ChEBI" id="CHEBI:138651"/>
        <dbReference type="EC" id="2.3.1.n5"/>
    </reaction>
</comment>
<comment type="pathway">
    <text evidence="1">Lipid metabolism; phospholipid metabolism.</text>
</comment>
<comment type="subunit">
    <text evidence="1">Probably interacts with PlsX.</text>
</comment>
<comment type="subcellular location">
    <subcellularLocation>
        <location evidence="1">Cell inner membrane</location>
        <topology evidence="1">Multi-pass membrane protein</topology>
    </subcellularLocation>
</comment>
<comment type="similarity">
    <text evidence="1">Belongs to the PlsY family.</text>
</comment>
<feature type="chain" id="PRO_1000136090" description="Glycerol-3-phosphate acyltransferase">
    <location>
        <begin position="1"/>
        <end position="205"/>
    </location>
</feature>
<feature type="topological domain" description="Periplasmic" evidence="1">
    <location>
        <begin position="1"/>
        <end position="3"/>
    </location>
</feature>
<feature type="transmembrane region" description="Helical" evidence="1">
    <location>
        <begin position="4"/>
        <end position="24"/>
    </location>
</feature>
<feature type="topological domain" description="Cytoplasmic" evidence="1">
    <location>
        <begin position="25"/>
        <end position="52"/>
    </location>
</feature>
<feature type="transmembrane region" description="Helical" evidence="1">
    <location>
        <begin position="53"/>
        <end position="73"/>
    </location>
</feature>
<feature type="topological domain" description="Periplasmic" evidence="1">
    <location>
        <begin position="74"/>
        <end position="80"/>
    </location>
</feature>
<feature type="transmembrane region" description="Helical" evidence="1">
    <location>
        <begin position="81"/>
        <end position="101"/>
    </location>
</feature>
<feature type="topological domain" description="Cytoplasmic" evidence="1">
    <location>
        <begin position="102"/>
        <end position="111"/>
    </location>
</feature>
<feature type="transmembrane region" description="Helical" evidence="1">
    <location>
        <begin position="112"/>
        <end position="132"/>
    </location>
</feature>
<feature type="topological domain" description="Periplasmic" evidence="1">
    <location>
        <begin position="133"/>
        <end position="137"/>
    </location>
</feature>
<feature type="transmembrane region" description="Helical" evidence="1">
    <location>
        <begin position="138"/>
        <end position="158"/>
    </location>
</feature>
<feature type="topological domain" description="Cytoplasmic" evidence="1">
    <location>
        <begin position="159"/>
        <end position="205"/>
    </location>
</feature>
<protein>
    <recommendedName>
        <fullName evidence="1">Glycerol-3-phosphate acyltransferase</fullName>
    </recommendedName>
    <alternativeName>
        <fullName evidence="1">G3P acyltransferase</fullName>
        <shortName evidence="1">GPAT</shortName>
        <ecNumber evidence="1">2.3.1.15</ecNumber>
        <ecNumber evidence="1">2.3.1.n5</ecNumber>
    </alternativeName>
    <alternativeName>
        <fullName evidence="1">Lysophosphatidic acid synthase</fullName>
        <shortName evidence="1">LPA synthase</shortName>
    </alternativeName>
</protein>
<accession>B7LQD7</accession>
<sequence length="205" mass="22240">MSAIAPGMILFAYLCGSISSAILVCRLCGLPDPRTSGSGNPGATNVLRMGGKGAALAVLIFDVLKGMLPVWGAYELGVSPFWLGLIAIAACLGHIWPIFFGFKGGKGVATAFGAIAPIGWDLTGVMAGTWLLTVLLSGYSSLGAIVSALIAPFYVWWFKPQFTFPVSMLSCLILLRHHDNIQRLWRRQETKIWTKLKRKREKDPE</sequence>
<evidence type="ECO:0000255" key="1">
    <source>
        <dbReference type="HAMAP-Rule" id="MF_01043"/>
    </source>
</evidence>
<name>PLSY_ESCF3</name>
<dbReference type="EC" id="2.3.1.15" evidence="1"/>
<dbReference type="EC" id="2.3.1.n5" evidence="1"/>
<dbReference type="EMBL" id="CU928158">
    <property type="protein sequence ID" value="CAQ90497.1"/>
    <property type="molecule type" value="Genomic_DNA"/>
</dbReference>
<dbReference type="RefSeq" id="WP_001272789.1">
    <property type="nucleotide sequence ID" value="NC_011740.1"/>
</dbReference>
<dbReference type="SMR" id="B7LQD7"/>
<dbReference type="GeneID" id="75060376"/>
<dbReference type="KEGG" id="efe:EFER_3004"/>
<dbReference type="HOGENOM" id="CLU_081254_0_2_6"/>
<dbReference type="OrthoDB" id="9777124at2"/>
<dbReference type="UniPathway" id="UPA00085"/>
<dbReference type="Proteomes" id="UP000000745">
    <property type="component" value="Chromosome"/>
</dbReference>
<dbReference type="GO" id="GO:0005886">
    <property type="term" value="C:plasma membrane"/>
    <property type="evidence" value="ECO:0007669"/>
    <property type="project" value="UniProtKB-SubCell"/>
</dbReference>
<dbReference type="GO" id="GO:0043772">
    <property type="term" value="F:acyl-phosphate glycerol-3-phosphate acyltransferase activity"/>
    <property type="evidence" value="ECO:0007669"/>
    <property type="project" value="InterPro"/>
</dbReference>
<dbReference type="GO" id="GO:0004366">
    <property type="term" value="F:glycerol-3-phosphate O-acyltransferase activity"/>
    <property type="evidence" value="ECO:0007669"/>
    <property type="project" value="UniProtKB-UniRule"/>
</dbReference>
<dbReference type="GO" id="GO:0008654">
    <property type="term" value="P:phospholipid biosynthetic process"/>
    <property type="evidence" value="ECO:0007669"/>
    <property type="project" value="UniProtKB-UniRule"/>
</dbReference>
<dbReference type="HAMAP" id="MF_01043">
    <property type="entry name" value="PlsY"/>
    <property type="match status" value="1"/>
</dbReference>
<dbReference type="InterPro" id="IPR003811">
    <property type="entry name" value="G3P_acylTferase_PlsY"/>
</dbReference>
<dbReference type="NCBIfam" id="TIGR00023">
    <property type="entry name" value="glycerol-3-phosphate 1-O-acyltransferase PlsY"/>
    <property type="match status" value="1"/>
</dbReference>
<dbReference type="PANTHER" id="PTHR30309:SF0">
    <property type="entry name" value="GLYCEROL-3-PHOSPHATE ACYLTRANSFERASE-RELATED"/>
    <property type="match status" value="1"/>
</dbReference>
<dbReference type="PANTHER" id="PTHR30309">
    <property type="entry name" value="INNER MEMBRANE PROTEIN YGIH"/>
    <property type="match status" value="1"/>
</dbReference>
<dbReference type="Pfam" id="PF02660">
    <property type="entry name" value="G3P_acyltransf"/>
    <property type="match status" value="1"/>
</dbReference>
<dbReference type="SMART" id="SM01207">
    <property type="entry name" value="G3P_acyltransf"/>
    <property type="match status" value="1"/>
</dbReference>
<keyword id="KW-0997">Cell inner membrane</keyword>
<keyword id="KW-1003">Cell membrane</keyword>
<keyword id="KW-0444">Lipid biosynthesis</keyword>
<keyword id="KW-0443">Lipid metabolism</keyword>
<keyword id="KW-0472">Membrane</keyword>
<keyword id="KW-0594">Phospholipid biosynthesis</keyword>
<keyword id="KW-1208">Phospholipid metabolism</keyword>
<keyword id="KW-0808">Transferase</keyword>
<keyword id="KW-0812">Transmembrane</keyword>
<keyword id="KW-1133">Transmembrane helix</keyword>
<reference key="1">
    <citation type="journal article" date="2009" name="PLoS Genet.">
        <title>Organised genome dynamics in the Escherichia coli species results in highly diverse adaptive paths.</title>
        <authorList>
            <person name="Touchon M."/>
            <person name="Hoede C."/>
            <person name="Tenaillon O."/>
            <person name="Barbe V."/>
            <person name="Baeriswyl S."/>
            <person name="Bidet P."/>
            <person name="Bingen E."/>
            <person name="Bonacorsi S."/>
            <person name="Bouchier C."/>
            <person name="Bouvet O."/>
            <person name="Calteau A."/>
            <person name="Chiapello H."/>
            <person name="Clermont O."/>
            <person name="Cruveiller S."/>
            <person name="Danchin A."/>
            <person name="Diard M."/>
            <person name="Dossat C."/>
            <person name="Karoui M.E."/>
            <person name="Frapy E."/>
            <person name="Garry L."/>
            <person name="Ghigo J.M."/>
            <person name="Gilles A.M."/>
            <person name="Johnson J."/>
            <person name="Le Bouguenec C."/>
            <person name="Lescat M."/>
            <person name="Mangenot S."/>
            <person name="Martinez-Jehanne V."/>
            <person name="Matic I."/>
            <person name="Nassif X."/>
            <person name="Oztas S."/>
            <person name="Petit M.A."/>
            <person name="Pichon C."/>
            <person name="Rouy Z."/>
            <person name="Ruf C.S."/>
            <person name="Schneider D."/>
            <person name="Tourret J."/>
            <person name="Vacherie B."/>
            <person name="Vallenet D."/>
            <person name="Medigue C."/>
            <person name="Rocha E.P.C."/>
            <person name="Denamur E."/>
        </authorList>
    </citation>
    <scope>NUCLEOTIDE SEQUENCE [LARGE SCALE GENOMIC DNA]</scope>
    <source>
        <strain>ATCC 35469 / DSM 13698 / BCRC 15582 / CCUG 18766 / IAM 14443 / JCM 21226 / LMG 7866 / NBRC 102419 / NCTC 12128 / CDC 0568-73</strain>
    </source>
</reference>
<gene>
    <name evidence="1" type="primary">plsY</name>
    <name type="synonym">ygiH</name>
    <name type="ordered locus">EFER_3004</name>
</gene>